<sequence length="160" mass="16724">MHTPENRPALTPGLTLVRLPHGEGLDLPAYETAGAAGMDLRAALPADEPMTIRPGERALVPTGFIFEIPAGHEGQIRPRSGLAFKHGITCLNTPGTVDSDYRGEVKVLLVNLGAEDFAVERGMRIAQMVIAPVTRLAIREAGGATTTARGAGGFGSTGTK</sequence>
<accession>Q92SM6</accession>
<proteinExistence type="inferred from homology"/>
<feature type="chain" id="PRO_0000182900" description="Deoxyuridine 5'-triphosphate nucleotidohydrolase">
    <location>
        <begin position="1"/>
        <end position="160"/>
    </location>
</feature>
<feature type="binding site" evidence="1">
    <location>
        <begin position="79"/>
        <end position="81"/>
    </location>
    <ligand>
        <name>substrate</name>
    </ligand>
</feature>
<feature type="binding site" evidence="1">
    <location>
        <position position="92"/>
    </location>
    <ligand>
        <name>substrate</name>
    </ligand>
</feature>
<feature type="binding site" evidence="1">
    <location>
        <begin position="96"/>
        <end position="98"/>
    </location>
    <ligand>
        <name>substrate</name>
    </ligand>
</feature>
<feature type="binding site" evidence="1">
    <location>
        <position position="106"/>
    </location>
    <ligand>
        <name>substrate</name>
    </ligand>
</feature>
<gene>
    <name evidence="1" type="primary">dut</name>
    <name type="synonym">dnaS</name>
    <name type="ordered locus">R00345</name>
    <name type="ORF">SMc00461</name>
</gene>
<comment type="function">
    <text evidence="1">This enzyme is involved in nucleotide metabolism: it produces dUMP, the immediate precursor of thymidine nucleotides and it decreases the intracellular concentration of dUTP so that uracil cannot be incorporated into DNA.</text>
</comment>
<comment type="catalytic activity">
    <reaction evidence="1">
        <text>dUTP + H2O = dUMP + diphosphate + H(+)</text>
        <dbReference type="Rhea" id="RHEA:10248"/>
        <dbReference type="ChEBI" id="CHEBI:15377"/>
        <dbReference type="ChEBI" id="CHEBI:15378"/>
        <dbReference type="ChEBI" id="CHEBI:33019"/>
        <dbReference type="ChEBI" id="CHEBI:61555"/>
        <dbReference type="ChEBI" id="CHEBI:246422"/>
        <dbReference type="EC" id="3.6.1.23"/>
    </reaction>
</comment>
<comment type="cofactor">
    <cofactor evidence="1">
        <name>Mg(2+)</name>
        <dbReference type="ChEBI" id="CHEBI:18420"/>
    </cofactor>
</comment>
<comment type="pathway">
    <text evidence="1">Pyrimidine metabolism; dUMP biosynthesis; dUMP from dCTP (dUTP route): step 2/2.</text>
</comment>
<comment type="similarity">
    <text evidence="1">Belongs to the dUTPase family.</text>
</comment>
<name>DUT_RHIME</name>
<keyword id="KW-0378">Hydrolase</keyword>
<keyword id="KW-0460">Magnesium</keyword>
<keyword id="KW-0479">Metal-binding</keyword>
<keyword id="KW-0546">Nucleotide metabolism</keyword>
<keyword id="KW-1185">Reference proteome</keyword>
<organism>
    <name type="scientific">Rhizobium meliloti (strain 1021)</name>
    <name type="common">Ensifer meliloti</name>
    <name type="synonym">Sinorhizobium meliloti</name>
    <dbReference type="NCBI Taxonomy" id="266834"/>
    <lineage>
        <taxon>Bacteria</taxon>
        <taxon>Pseudomonadati</taxon>
        <taxon>Pseudomonadota</taxon>
        <taxon>Alphaproteobacteria</taxon>
        <taxon>Hyphomicrobiales</taxon>
        <taxon>Rhizobiaceae</taxon>
        <taxon>Sinorhizobium/Ensifer group</taxon>
        <taxon>Sinorhizobium</taxon>
    </lineage>
</organism>
<protein>
    <recommendedName>
        <fullName evidence="1">Deoxyuridine 5'-triphosphate nucleotidohydrolase</fullName>
        <shortName evidence="1">dUTPase</shortName>
        <ecNumber evidence="1">3.6.1.23</ecNumber>
    </recommendedName>
    <alternativeName>
        <fullName evidence="1">dUTP pyrophosphatase</fullName>
    </alternativeName>
</protein>
<dbReference type="EC" id="3.6.1.23" evidence="1"/>
<dbReference type="EMBL" id="AL591688">
    <property type="protein sequence ID" value="CAC41782.1"/>
    <property type="molecule type" value="Genomic_DNA"/>
</dbReference>
<dbReference type="RefSeq" id="NP_384451.1">
    <property type="nucleotide sequence ID" value="NC_003047.1"/>
</dbReference>
<dbReference type="RefSeq" id="WP_010968516.1">
    <property type="nucleotide sequence ID" value="NC_003047.1"/>
</dbReference>
<dbReference type="SMR" id="Q92SM6"/>
<dbReference type="EnsemblBacteria" id="CAC41782">
    <property type="protein sequence ID" value="CAC41782"/>
    <property type="gene ID" value="SMc00461"/>
</dbReference>
<dbReference type="KEGG" id="sme:SMc00461"/>
<dbReference type="PATRIC" id="fig|266834.11.peg.1716"/>
<dbReference type="eggNOG" id="COG0756">
    <property type="taxonomic scope" value="Bacteria"/>
</dbReference>
<dbReference type="HOGENOM" id="CLU_068508_1_0_5"/>
<dbReference type="OrthoDB" id="9809956at2"/>
<dbReference type="UniPathway" id="UPA00610">
    <property type="reaction ID" value="UER00666"/>
</dbReference>
<dbReference type="Proteomes" id="UP000001976">
    <property type="component" value="Chromosome"/>
</dbReference>
<dbReference type="GO" id="GO:0004170">
    <property type="term" value="F:dUTP diphosphatase activity"/>
    <property type="evidence" value="ECO:0007669"/>
    <property type="project" value="UniProtKB-UniRule"/>
</dbReference>
<dbReference type="GO" id="GO:0000287">
    <property type="term" value="F:magnesium ion binding"/>
    <property type="evidence" value="ECO:0007669"/>
    <property type="project" value="UniProtKB-UniRule"/>
</dbReference>
<dbReference type="GO" id="GO:0006226">
    <property type="term" value="P:dUMP biosynthetic process"/>
    <property type="evidence" value="ECO:0007669"/>
    <property type="project" value="UniProtKB-UniRule"/>
</dbReference>
<dbReference type="GO" id="GO:0046081">
    <property type="term" value="P:dUTP catabolic process"/>
    <property type="evidence" value="ECO:0007669"/>
    <property type="project" value="InterPro"/>
</dbReference>
<dbReference type="CDD" id="cd07557">
    <property type="entry name" value="trimeric_dUTPase"/>
    <property type="match status" value="1"/>
</dbReference>
<dbReference type="Gene3D" id="2.70.40.10">
    <property type="match status" value="1"/>
</dbReference>
<dbReference type="HAMAP" id="MF_00116">
    <property type="entry name" value="dUTPase_bact"/>
    <property type="match status" value="1"/>
</dbReference>
<dbReference type="InterPro" id="IPR008181">
    <property type="entry name" value="dUTPase"/>
</dbReference>
<dbReference type="InterPro" id="IPR029054">
    <property type="entry name" value="dUTPase-like"/>
</dbReference>
<dbReference type="InterPro" id="IPR036157">
    <property type="entry name" value="dUTPase-like_sf"/>
</dbReference>
<dbReference type="InterPro" id="IPR033704">
    <property type="entry name" value="dUTPase_trimeric"/>
</dbReference>
<dbReference type="NCBIfam" id="TIGR00576">
    <property type="entry name" value="dut"/>
    <property type="match status" value="1"/>
</dbReference>
<dbReference type="NCBIfam" id="NF001862">
    <property type="entry name" value="PRK00601.1"/>
    <property type="match status" value="1"/>
</dbReference>
<dbReference type="PANTHER" id="PTHR11241">
    <property type="entry name" value="DEOXYURIDINE 5'-TRIPHOSPHATE NUCLEOTIDOHYDROLASE"/>
    <property type="match status" value="1"/>
</dbReference>
<dbReference type="PANTHER" id="PTHR11241:SF0">
    <property type="entry name" value="DEOXYURIDINE 5'-TRIPHOSPHATE NUCLEOTIDOHYDROLASE"/>
    <property type="match status" value="1"/>
</dbReference>
<dbReference type="Pfam" id="PF00692">
    <property type="entry name" value="dUTPase"/>
    <property type="match status" value="1"/>
</dbReference>
<dbReference type="SUPFAM" id="SSF51283">
    <property type="entry name" value="dUTPase-like"/>
    <property type="match status" value="1"/>
</dbReference>
<evidence type="ECO:0000255" key="1">
    <source>
        <dbReference type="HAMAP-Rule" id="MF_00116"/>
    </source>
</evidence>
<reference key="1">
    <citation type="journal article" date="2001" name="Proc. Natl. Acad. Sci. U.S.A.">
        <title>Analysis of the chromosome sequence of the legume symbiont Sinorhizobium meliloti strain 1021.</title>
        <authorList>
            <person name="Capela D."/>
            <person name="Barloy-Hubler F."/>
            <person name="Gouzy J."/>
            <person name="Bothe G."/>
            <person name="Ampe F."/>
            <person name="Batut J."/>
            <person name="Boistard P."/>
            <person name="Becker A."/>
            <person name="Boutry M."/>
            <person name="Cadieu E."/>
            <person name="Dreano S."/>
            <person name="Gloux S."/>
            <person name="Godrie T."/>
            <person name="Goffeau A."/>
            <person name="Kahn D."/>
            <person name="Kiss E."/>
            <person name="Lelaure V."/>
            <person name="Masuy D."/>
            <person name="Pohl T."/>
            <person name="Portetelle D."/>
            <person name="Puehler A."/>
            <person name="Purnelle B."/>
            <person name="Ramsperger U."/>
            <person name="Renard C."/>
            <person name="Thebault P."/>
            <person name="Vandenbol M."/>
            <person name="Weidner S."/>
            <person name="Galibert F."/>
        </authorList>
    </citation>
    <scope>NUCLEOTIDE SEQUENCE [LARGE SCALE GENOMIC DNA]</scope>
    <source>
        <strain>1021</strain>
    </source>
</reference>
<reference key="2">
    <citation type="journal article" date="2001" name="Science">
        <title>The composite genome of the legume symbiont Sinorhizobium meliloti.</title>
        <authorList>
            <person name="Galibert F."/>
            <person name="Finan T.M."/>
            <person name="Long S.R."/>
            <person name="Puehler A."/>
            <person name="Abola P."/>
            <person name="Ampe F."/>
            <person name="Barloy-Hubler F."/>
            <person name="Barnett M.J."/>
            <person name="Becker A."/>
            <person name="Boistard P."/>
            <person name="Bothe G."/>
            <person name="Boutry M."/>
            <person name="Bowser L."/>
            <person name="Buhrmester J."/>
            <person name="Cadieu E."/>
            <person name="Capela D."/>
            <person name="Chain P."/>
            <person name="Cowie A."/>
            <person name="Davis R.W."/>
            <person name="Dreano S."/>
            <person name="Federspiel N.A."/>
            <person name="Fisher R.F."/>
            <person name="Gloux S."/>
            <person name="Godrie T."/>
            <person name="Goffeau A."/>
            <person name="Golding B."/>
            <person name="Gouzy J."/>
            <person name="Gurjal M."/>
            <person name="Hernandez-Lucas I."/>
            <person name="Hong A."/>
            <person name="Huizar L."/>
            <person name="Hyman R.W."/>
            <person name="Jones T."/>
            <person name="Kahn D."/>
            <person name="Kahn M.L."/>
            <person name="Kalman S."/>
            <person name="Keating D.H."/>
            <person name="Kiss E."/>
            <person name="Komp C."/>
            <person name="Lelaure V."/>
            <person name="Masuy D."/>
            <person name="Palm C."/>
            <person name="Peck M.C."/>
            <person name="Pohl T.M."/>
            <person name="Portetelle D."/>
            <person name="Purnelle B."/>
            <person name="Ramsperger U."/>
            <person name="Surzycki R."/>
            <person name="Thebault P."/>
            <person name="Vandenbol M."/>
            <person name="Vorhoelter F.J."/>
            <person name="Weidner S."/>
            <person name="Wells D.H."/>
            <person name="Wong K."/>
            <person name="Yeh K.-C."/>
            <person name="Batut J."/>
        </authorList>
    </citation>
    <scope>NUCLEOTIDE SEQUENCE [LARGE SCALE GENOMIC DNA]</scope>
    <source>
        <strain>1021</strain>
    </source>
</reference>